<keyword id="KW-0027">Amidation</keyword>
<keyword id="KW-0903">Direct protein sequencing</keyword>
<keyword id="KW-0527">Neuropeptide</keyword>
<keyword id="KW-0964">Secreted</keyword>
<reference evidence="4" key="1">
    <citation type="journal article" date="2009" name="BMC Evol. Biol.">
        <title>A proteomic approach for studying insect phylogeny: CAPA peptides of ancient insect taxa (Dictyoptera, Blattoptera) as a test case.</title>
        <authorList>
            <person name="Roth S."/>
            <person name="Fromm B."/>
            <person name="Gaede G."/>
            <person name="Predel R."/>
        </authorList>
    </citation>
    <scope>PROTEIN SEQUENCE</scope>
    <scope>AMIDATION AT VAL-11</scope>
    <source>
        <tissue evidence="2">Abdominal perisympathetic organs</tissue>
    </source>
</reference>
<accession>P85540</accession>
<feature type="peptide" id="PRO_0000378775" description="Periviscerokinin-2" evidence="2">
    <location>
        <begin position="1"/>
        <end position="11"/>
    </location>
</feature>
<feature type="modified residue" description="Valine amide" evidence="2">
    <location>
        <position position="11"/>
    </location>
</feature>
<comment type="function">
    <text evidence="4">Mediates visceral muscle contractile activity (myotropic activity).</text>
</comment>
<comment type="subcellular location">
    <subcellularLocation>
        <location evidence="4">Secreted</location>
    </subcellularLocation>
</comment>
<comment type="similarity">
    <text evidence="1">Belongs to the periviscerokinin family.</text>
</comment>
<dbReference type="GO" id="GO:0005576">
    <property type="term" value="C:extracellular region"/>
    <property type="evidence" value="ECO:0007669"/>
    <property type="project" value="UniProtKB-SubCell"/>
</dbReference>
<dbReference type="GO" id="GO:0007218">
    <property type="term" value="P:neuropeptide signaling pathway"/>
    <property type="evidence" value="ECO:0007669"/>
    <property type="project" value="UniProtKB-KW"/>
</dbReference>
<dbReference type="InterPro" id="IPR013231">
    <property type="entry name" value="Periviscerokinin"/>
</dbReference>
<dbReference type="Pfam" id="PF08259">
    <property type="entry name" value="Periviscerokin"/>
    <property type="match status" value="1"/>
</dbReference>
<proteinExistence type="evidence at protein level"/>
<sequence>GSSGLISMPRV</sequence>
<organism>
    <name type="scientific">Bantua robusta</name>
    <name type="common">African bullet roach</name>
    <dbReference type="NCBI Taxonomy" id="344686"/>
    <lineage>
        <taxon>Eukaryota</taxon>
        <taxon>Metazoa</taxon>
        <taxon>Ecdysozoa</taxon>
        <taxon>Arthropoda</taxon>
        <taxon>Hexapoda</taxon>
        <taxon>Insecta</taxon>
        <taxon>Pterygota</taxon>
        <taxon>Neoptera</taxon>
        <taxon>Polyneoptera</taxon>
        <taxon>Dictyoptera</taxon>
        <taxon>Blattodea</taxon>
        <taxon>Blaberoidea</taxon>
        <taxon>Blaberidae</taxon>
        <taxon>Perisphaerinae</taxon>
        <taxon>Bantua</taxon>
    </lineage>
</organism>
<evidence type="ECO:0000255" key="1"/>
<evidence type="ECO:0000269" key="2">
    <source>
    </source>
</evidence>
<evidence type="ECO:0000303" key="3">
    <source>
    </source>
</evidence>
<evidence type="ECO:0000305" key="4"/>
<protein>
    <recommendedName>
        <fullName evidence="3">Periviscerokinin-2</fullName>
        <shortName evidence="3">BanRo-PVK-2</shortName>
    </recommendedName>
</protein>
<name>PVK2_BANRO</name>